<reference key="1">
    <citation type="journal article" date="1993" name="Biol. Chem. Hoppe-Seyler">
        <title>Isolation and preliminary characterization of the cysteine-proteinases from the latex of Carica candamarcensis Hook.</title>
        <authorList>
            <person name="Walreavens V."/>
            <person name="Jaziri M."/>
            <person name="van Beeumen J."/>
            <person name="Schnek A.G."/>
            <person name="Kleinschmidt T."/>
            <person name="Looze Y."/>
        </authorList>
    </citation>
    <scope>PROTEIN SEQUENCE</scope>
    <source>
        <tissue>Latex</tissue>
    </source>
</reference>
<comment type="similarity">
    <text evidence="3 4 5">Belongs to the peptidase C1 family.</text>
</comment>
<proteinExistence type="evidence at protein level"/>
<sequence>YPGSVDWRQKGAVTPVKDQNPCGSCWAFSTVATVEGINKIVTG</sequence>
<feature type="signal peptide" evidence="2">
    <location>
        <begin position="1"/>
        <end status="unknown"/>
    </location>
</feature>
<feature type="chain" id="PRO_0000050565" description="Cysteine proteinase 2">
    <location>
        <begin status="unknown"/>
        <end position="43" status="greater than"/>
    </location>
</feature>
<feature type="active site" evidence="3">
    <location>
        <position position="25"/>
    </location>
</feature>
<feature type="non-terminal residue">
    <location>
        <position position="43"/>
    </location>
</feature>
<dbReference type="EC" id="3.4.22.-" evidence="1"/>
<dbReference type="SMR" id="P32955"/>
<dbReference type="GO" id="GO:0008234">
    <property type="term" value="F:cysteine-type peptidase activity"/>
    <property type="evidence" value="ECO:0007669"/>
    <property type="project" value="UniProtKB-KW"/>
</dbReference>
<dbReference type="GO" id="GO:0006508">
    <property type="term" value="P:proteolysis"/>
    <property type="evidence" value="ECO:0007669"/>
    <property type="project" value="UniProtKB-KW"/>
</dbReference>
<dbReference type="Gene3D" id="3.90.70.10">
    <property type="entry name" value="Cysteine proteinases"/>
    <property type="match status" value="1"/>
</dbReference>
<dbReference type="InterPro" id="IPR038765">
    <property type="entry name" value="Papain-like_cys_pep_sf"/>
</dbReference>
<dbReference type="InterPro" id="IPR000169">
    <property type="entry name" value="Pept_cys_AS"/>
</dbReference>
<dbReference type="InterPro" id="IPR013128">
    <property type="entry name" value="Peptidase_C1A"/>
</dbReference>
<dbReference type="InterPro" id="IPR000668">
    <property type="entry name" value="Peptidase_C1A_C"/>
</dbReference>
<dbReference type="PANTHER" id="PTHR12411">
    <property type="entry name" value="CYSTEINE PROTEASE FAMILY C1-RELATED"/>
    <property type="match status" value="1"/>
</dbReference>
<dbReference type="Pfam" id="PF00112">
    <property type="entry name" value="Peptidase_C1"/>
    <property type="match status" value="1"/>
</dbReference>
<dbReference type="SUPFAM" id="SSF54001">
    <property type="entry name" value="Cysteine proteinases"/>
    <property type="match status" value="1"/>
</dbReference>
<dbReference type="PROSITE" id="PS00139">
    <property type="entry name" value="THIOL_PROTEASE_CYS"/>
    <property type="match status" value="1"/>
</dbReference>
<keyword id="KW-0903">Direct protein sequencing</keyword>
<keyword id="KW-0378">Hydrolase</keyword>
<keyword id="KW-0645">Protease</keyword>
<keyword id="KW-0732">Signal</keyword>
<keyword id="KW-0788">Thiol protease</keyword>
<protein>
    <recommendedName>
        <fullName>Cysteine proteinase 2</fullName>
        <ecNumber evidence="1">3.4.22.-</ecNumber>
    </recommendedName>
    <alternativeName>
        <fullName>CC-II</fullName>
    </alternativeName>
    <alternativeName>
        <fullName>Cysteine proteinase II</fullName>
    </alternativeName>
</protein>
<evidence type="ECO:0000250" key="1">
    <source>
        <dbReference type="UniProtKB" id="P80884"/>
    </source>
</evidence>
<evidence type="ECO:0000255" key="2"/>
<evidence type="ECO:0000255" key="3">
    <source>
        <dbReference type="PROSITE-ProRule" id="PRU10088"/>
    </source>
</evidence>
<evidence type="ECO:0000255" key="4">
    <source>
        <dbReference type="PROSITE-ProRule" id="PRU10089"/>
    </source>
</evidence>
<evidence type="ECO:0000255" key="5">
    <source>
        <dbReference type="PROSITE-ProRule" id="PRU10090"/>
    </source>
</evidence>
<name>CYSP2_VASCU</name>
<organism>
    <name type="scientific">Vasconcellea cundinamarcensis</name>
    <name type="common">Mountain papaya</name>
    <name type="synonym">Carica candamarcensis</name>
    <dbReference type="NCBI Taxonomy" id="35926"/>
    <lineage>
        <taxon>Eukaryota</taxon>
        <taxon>Viridiplantae</taxon>
        <taxon>Streptophyta</taxon>
        <taxon>Embryophyta</taxon>
        <taxon>Tracheophyta</taxon>
        <taxon>Spermatophyta</taxon>
        <taxon>Magnoliopsida</taxon>
        <taxon>eudicotyledons</taxon>
        <taxon>Gunneridae</taxon>
        <taxon>Pentapetalae</taxon>
        <taxon>rosids</taxon>
        <taxon>malvids</taxon>
        <taxon>Brassicales</taxon>
        <taxon>Caricaceae</taxon>
        <taxon>Vasconcellea</taxon>
    </lineage>
</organism>
<accession>P32955</accession>